<protein>
    <recommendedName>
        <fullName evidence="2">Small ribosomal subunit protein uS19</fullName>
    </recommendedName>
    <alternativeName>
        <fullName>30S ribosomal protein S19</fullName>
    </alternativeName>
</protein>
<comment type="function">
    <text evidence="1">Protein S19 forms a complex with S13 that binds strongly to the 16S ribosomal RNA.</text>
</comment>
<comment type="similarity">
    <text evidence="2">Belongs to the universal ribosomal protein uS19 family.</text>
</comment>
<gene>
    <name type="primary">rps19</name>
    <name type="ordered locus">MJ0180</name>
</gene>
<reference key="1">
    <citation type="journal article" date="1996" name="Science">
        <title>Complete genome sequence of the methanogenic archaeon, Methanococcus jannaschii.</title>
        <authorList>
            <person name="Bult C.J."/>
            <person name="White O."/>
            <person name="Olsen G.J."/>
            <person name="Zhou L."/>
            <person name="Fleischmann R.D."/>
            <person name="Sutton G.G."/>
            <person name="Blake J.A."/>
            <person name="FitzGerald L.M."/>
            <person name="Clayton R.A."/>
            <person name="Gocayne J.D."/>
            <person name="Kerlavage A.R."/>
            <person name="Dougherty B.A."/>
            <person name="Tomb J.-F."/>
            <person name="Adams M.D."/>
            <person name="Reich C.I."/>
            <person name="Overbeek R."/>
            <person name="Kirkness E.F."/>
            <person name="Weinstock K.G."/>
            <person name="Merrick J.M."/>
            <person name="Glodek A."/>
            <person name="Scott J.L."/>
            <person name="Geoghagen N.S.M."/>
            <person name="Weidman J.F."/>
            <person name="Fuhrmann J.L."/>
            <person name="Nguyen D."/>
            <person name="Utterback T.R."/>
            <person name="Kelley J.M."/>
            <person name="Peterson J.D."/>
            <person name="Sadow P.W."/>
            <person name="Hanna M.C."/>
            <person name="Cotton M.D."/>
            <person name="Roberts K.M."/>
            <person name="Hurst M.A."/>
            <person name="Kaine B.P."/>
            <person name="Borodovsky M."/>
            <person name="Klenk H.-P."/>
            <person name="Fraser C.M."/>
            <person name="Smith H.O."/>
            <person name="Woese C.R."/>
            <person name="Venter J.C."/>
        </authorList>
    </citation>
    <scope>NUCLEOTIDE SEQUENCE [LARGE SCALE GENOMIC DNA]</scope>
    <source>
        <strain>ATCC 43067 / DSM 2661 / JAL-1 / JCM 10045 / NBRC 100440</strain>
    </source>
</reference>
<evidence type="ECO:0000250" key="1"/>
<evidence type="ECO:0000305" key="2"/>
<organism>
    <name type="scientific">Methanocaldococcus jannaschii (strain ATCC 43067 / DSM 2661 / JAL-1 / JCM 10045 / NBRC 100440)</name>
    <name type="common">Methanococcus jannaschii</name>
    <dbReference type="NCBI Taxonomy" id="243232"/>
    <lineage>
        <taxon>Archaea</taxon>
        <taxon>Methanobacteriati</taxon>
        <taxon>Methanobacteriota</taxon>
        <taxon>Methanomada group</taxon>
        <taxon>Methanococci</taxon>
        <taxon>Methanococcales</taxon>
        <taxon>Methanocaldococcaceae</taxon>
        <taxon>Methanocaldococcus</taxon>
    </lineage>
</organism>
<proteinExistence type="inferred from homology"/>
<name>RS19_METJA</name>
<keyword id="KW-1185">Reference proteome</keyword>
<keyword id="KW-0687">Ribonucleoprotein</keyword>
<keyword id="KW-0689">Ribosomal protein</keyword>
<keyword id="KW-0694">RNA-binding</keyword>
<keyword id="KW-0699">rRNA-binding</keyword>
<accession>P54018</accession>
<sequence>MASARRRRIKKKKQVISKKIEFRYRGYTLEELQQMPLREFAKLLPARQRRTLLRGLTPQQKKLAMKIKKARRLLNKGKEPRIIRTHCRDFVITPDMVGLTFGVYNGKEFVEVKVTPEMIGHYLGEFSLTRKPVQHGAPGMGATRSSMFVPIK</sequence>
<feature type="chain" id="PRO_0000130002" description="Small ribosomal subunit protein uS19">
    <location>
        <begin position="1"/>
        <end position="152"/>
    </location>
</feature>
<dbReference type="EMBL" id="L77117">
    <property type="protein sequence ID" value="AAB98165.1"/>
    <property type="molecule type" value="Genomic_DNA"/>
</dbReference>
<dbReference type="PIR" id="E64322">
    <property type="entry name" value="E64322"/>
</dbReference>
<dbReference type="RefSeq" id="WP_010869675.1">
    <property type="nucleotide sequence ID" value="NC_000909.1"/>
</dbReference>
<dbReference type="SMR" id="P54018"/>
<dbReference type="FunCoup" id="P54018">
    <property type="interactions" value="140"/>
</dbReference>
<dbReference type="STRING" id="243232.MJ_0180"/>
<dbReference type="PaxDb" id="243232-MJ_0180"/>
<dbReference type="EnsemblBacteria" id="AAB98165">
    <property type="protein sequence ID" value="AAB98165"/>
    <property type="gene ID" value="MJ_0180"/>
</dbReference>
<dbReference type="GeneID" id="24892258"/>
<dbReference type="KEGG" id="mja:MJ_0180"/>
<dbReference type="eggNOG" id="arCOG04099">
    <property type="taxonomic scope" value="Archaea"/>
</dbReference>
<dbReference type="HOGENOM" id="CLU_097347_1_1_2"/>
<dbReference type="InParanoid" id="P54018"/>
<dbReference type="OrthoDB" id="30559at2157"/>
<dbReference type="PhylomeDB" id="P54018"/>
<dbReference type="Proteomes" id="UP000000805">
    <property type="component" value="Chromosome"/>
</dbReference>
<dbReference type="GO" id="GO:0022627">
    <property type="term" value="C:cytosolic small ribosomal subunit"/>
    <property type="evidence" value="ECO:0000318"/>
    <property type="project" value="GO_Central"/>
</dbReference>
<dbReference type="GO" id="GO:0019843">
    <property type="term" value="F:rRNA binding"/>
    <property type="evidence" value="ECO:0007669"/>
    <property type="project" value="UniProtKB-UniRule"/>
</dbReference>
<dbReference type="GO" id="GO:0003735">
    <property type="term" value="F:structural constituent of ribosome"/>
    <property type="evidence" value="ECO:0000318"/>
    <property type="project" value="GO_Central"/>
</dbReference>
<dbReference type="GO" id="GO:0000028">
    <property type="term" value="P:ribosomal small subunit assembly"/>
    <property type="evidence" value="ECO:0000318"/>
    <property type="project" value="GO_Central"/>
</dbReference>
<dbReference type="GO" id="GO:0006412">
    <property type="term" value="P:translation"/>
    <property type="evidence" value="ECO:0007669"/>
    <property type="project" value="UniProtKB-UniRule"/>
</dbReference>
<dbReference type="FunFam" id="3.30.860.10:FF:000002">
    <property type="entry name" value="40S ribosomal protein S15"/>
    <property type="match status" value="1"/>
</dbReference>
<dbReference type="Gene3D" id="3.30.860.10">
    <property type="entry name" value="30s Ribosomal Protein S19, Chain A"/>
    <property type="match status" value="1"/>
</dbReference>
<dbReference type="HAMAP" id="MF_00531">
    <property type="entry name" value="Ribosomal_uS19"/>
    <property type="match status" value="1"/>
</dbReference>
<dbReference type="InterPro" id="IPR002222">
    <property type="entry name" value="Ribosomal_uS19"/>
</dbReference>
<dbReference type="InterPro" id="IPR020934">
    <property type="entry name" value="Ribosomal_uS19_CS"/>
</dbReference>
<dbReference type="InterPro" id="IPR005713">
    <property type="entry name" value="Ribosomal_uS19_euk/arc"/>
</dbReference>
<dbReference type="InterPro" id="IPR023575">
    <property type="entry name" value="Ribosomal_uS19_SF"/>
</dbReference>
<dbReference type="NCBIfam" id="NF003121">
    <property type="entry name" value="PRK04038.1"/>
    <property type="match status" value="1"/>
</dbReference>
<dbReference type="NCBIfam" id="TIGR01025">
    <property type="entry name" value="uS19_arch"/>
    <property type="match status" value="1"/>
</dbReference>
<dbReference type="PANTHER" id="PTHR11880">
    <property type="entry name" value="RIBOSOMAL PROTEIN S19P FAMILY MEMBER"/>
    <property type="match status" value="1"/>
</dbReference>
<dbReference type="PANTHER" id="PTHR11880:SF2">
    <property type="entry name" value="SMALL RIBOSOMAL SUBUNIT PROTEIN US19"/>
    <property type="match status" value="1"/>
</dbReference>
<dbReference type="Pfam" id="PF00203">
    <property type="entry name" value="Ribosomal_S19"/>
    <property type="match status" value="1"/>
</dbReference>
<dbReference type="PIRSF" id="PIRSF002144">
    <property type="entry name" value="Ribosomal_S19"/>
    <property type="match status" value="1"/>
</dbReference>
<dbReference type="PRINTS" id="PR00975">
    <property type="entry name" value="RIBOSOMALS19"/>
</dbReference>
<dbReference type="SUPFAM" id="SSF54570">
    <property type="entry name" value="Ribosomal protein S19"/>
    <property type="match status" value="1"/>
</dbReference>
<dbReference type="PROSITE" id="PS00323">
    <property type="entry name" value="RIBOSOMAL_S19"/>
    <property type="match status" value="1"/>
</dbReference>